<comment type="catalytic activity">
    <reaction evidence="1">
        <text>CMP + ATP = CDP + ADP</text>
        <dbReference type="Rhea" id="RHEA:11600"/>
        <dbReference type="ChEBI" id="CHEBI:30616"/>
        <dbReference type="ChEBI" id="CHEBI:58069"/>
        <dbReference type="ChEBI" id="CHEBI:60377"/>
        <dbReference type="ChEBI" id="CHEBI:456216"/>
        <dbReference type="EC" id="2.7.4.25"/>
    </reaction>
</comment>
<comment type="catalytic activity">
    <reaction evidence="1">
        <text>dCMP + ATP = dCDP + ADP</text>
        <dbReference type="Rhea" id="RHEA:25094"/>
        <dbReference type="ChEBI" id="CHEBI:30616"/>
        <dbReference type="ChEBI" id="CHEBI:57566"/>
        <dbReference type="ChEBI" id="CHEBI:58593"/>
        <dbReference type="ChEBI" id="CHEBI:456216"/>
        <dbReference type="EC" id="2.7.4.25"/>
    </reaction>
</comment>
<comment type="subcellular location">
    <subcellularLocation>
        <location evidence="1">Cytoplasm</location>
    </subcellularLocation>
</comment>
<comment type="similarity">
    <text evidence="1">Belongs to the cytidylate kinase family. Type 1 subfamily.</text>
</comment>
<name>KCY_PSEPW</name>
<proteinExistence type="inferred from homology"/>
<feature type="chain" id="PRO_1000100675" description="Cytidylate kinase">
    <location>
        <begin position="1"/>
        <end position="228"/>
    </location>
</feature>
<feature type="binding site" evidence="1">
    <location>
        <begin position="12"/>
        <end position="20"/>
    </location>
    <ligand>
        <name>ATP</name>
        <dbReference type="ChEBI" id="CHEBI:30616"/>
    </ligand>
</feature>
<sequence>MNSQAPVITIDGPSGSGKGTVAGLLARELGWRLLDSGALYRLLAFNASNHGVDLTNEELLKALAAHLDVQFIAAEPGKLQQIILEGEDVSNVIRTETVGAGASMVASLPAVREALLQRQRAFRETPGLIADGRDMGTVVFPDAPLKVFLTASAEERARRRYLQLKGKGEDVSLSSLLDEIRARDERDTQRAVAPLKPAADAIQLDSTELSIEQVLHRIRSELAQRDLV</sequence>
<organism>
    <name type="scientific">Pseudomonas putida (strain W619)</name>
    <dbReference type="NCBI Taxonomy" id="390235"/>
    <lineage>
        <taxon>Bacteria</taxon>
        <taxon>Pseudomonadati</taxon>
        <taxon>Pseudomonadota</taxon>
        <taxon>Gammaproteobacteria</taxon>
        <taxon>Pseudomonadales</taxon>
        <taxon>Pseudomonadaceae</taxon>
        <taxon>Pseudomonas</taxon>
    </lineage>
</organism>
<evidence type="ECO:0000255" key="1">
    <source>
        <dbReference type="HAMAP-Rule" id="MF_00238"/>
    </source>
</evidence>
<dbReference type="EC" id="2.7.4.25" evidence="1"/>
<dbReference type="EMBL" id="CP000949">
    <property type="protein sequence ID" value="ACA71883.1"/>
    <property type="molecule type" value="Genomic_DNA"/>
</dbReference>
<dbReference type="SMR" id="B1J5H0"/>
<dbReference type="STRING" id="390235.PputW619_1378"/>
<dbReference type="KEGG" id="ppw:PputW619_1378"/>
<dbReference type="eggNOG" id="COG0283">
    <property type="taxonomic scope" value="Bacteria"/>
</dbReference>
<dbReference type="HOGENOM" id="CLU_079959_0_2_6"/>
<dbReference type="OrthoDB" id="9807434at2"/>
<dbReference type="GO" id="GO:0005829">
    <property type="term" value="C:cytosol"/>
    <property type="evidence" value="ECO:0007669"/>
    <property type="project" value="TreeGrafter"/>
</dbReference>
<dbReference type="GO" id="GO:0005524">
    <property type="term" value="F:ATP binding"/>
    <property type="evidence" value="ECO:0007669"/>
    <property type="project" value="UniProtKB-UniRule"/>
</dbReference>
<dbReference type="GO" id="GO:0036430">
    <property type="term" value="F:CMP kinase activity"/>
    <property type="evidence" value="ECO:0007669"/>
    <property type="project" value="RHEA"/>
</dbReference>
<dbReference type="GO" id="GO:0036431">
    <property type="term" value="F:dCMP kinase activity"/>
    <property type="evidence" value="ECO:0007669"/>
    <property type="project" value="RHEA"/>
</dbReference>
<dbReference type="GO" id="GO:0015949">
    <property type="term" value="P:nucleobase-containing small molecule interconversion"/>
    <property type="evidence" value="ECO:0007669"/>
    <property type="project" value="TreeGrafter"/>
</dbReference>
<dbReference type="GO" id="GO:0006220">
    <property type="term" value="P:pyrimidine nucleotide metabolic process"/>
    <property type="evidence" value="ECO:0007669"/>
    <property type="project" value="UniProtKB-UniRule"/>
</dbReference>
<dbReference type="CDD" id="cd02020">
    <property type="entry name" value="CMPK"/>
    <property type="match status" value="1"/>
</dbReference>
<dbReference type="FunFam" id="3.40.50.300:FF:000262">
    <property type="entry name" value="Cytidylate kinase"/>
    <property type="match status" value="1"/>
</dbReference>
<dbReference type="Gene3D" id="3.40.50.300">
    <property type="entry name" value="P-loop containing nucleotide triphosphate hydrolases"/>
    <property type="match status" value="1"/>
</dbReference>
<dbReference type="HAMAP" id="MF_00238">
    <property type="entry name" value="Cytidyl_kinase_type1"/>
    <property type="match status" value="1"/>
</dbReference>
<dbReference type="InterPro" id="IPR003136">
    <property type="entry name" value="Cytidylate_kin"/>
</dbReference>
<dbReference type="InterPro" id="IPR011994">
    <property type="entry name" value="Cytidylate_kinase_dom"/>
</dbReference>
<dbReference type="InterPro" id="IPR027417">
    <property type="entry name" value="P-loop_NTPase"/>
</dbReference>
<dbReference type="NCBIfam" id="TIGR00017">
    <property type="entry name" value="cmk"/>
    <property type="match status" value="1"/>
</dbReference>
<dbReference type="PANTHER" id="PTHR21299:SF2">
    <property type="entry name" value="CYTIDYLATE KINASE"/>
    <property type="match status" value="1"/>
</dbReference>
<dbReference type="PANTHER" id="PTHR21299">
    <property type="entry name" value="CYTIDYLATE KINASE/PANTOATE-BETA-ALANINE LIGASE"/>
    <property type="match status" value="1"/>
</dbReference>
<dbReference type="Pfam" id="PF02224">
    <property type="entry name" value="Cytidylate_kin"/>
    <property type="match status" value="1"/>
</dbReference>
<dbReference type="SUPFAM" id="SSF52540">
    <property type="entry name" value="P-loop containing nucleoside triphosphate hydrolases"/>
    <property type="match status" value="1"/>
</dbReference>
<accession>B1J5H0</accession>
<gene>
    <name evidence="1" type="primary">cmk</name>
    <name type="ordered locus">PputW619_1378</name>
</gene>
<keyword id="KW-0067">ATP-binding</keyword>
<keyword id="KW-0963">Cytoplasm</keyword>
<keyword id="KW-0418">Kinase</keyword>
<keyword id="KW-0547">Nucleotide-binding</keyword>
<keyword id="KW-0808">Transferase</keyword>
<reference key="1">
    <citation type="submission" date="2008-02" db="EMBL/GenBank/DDBJ databases">
        <title>Complete sequence of Pseudomonas putida W619.</title>
        <authorList>
            <person name="Copeland A."/>
            <person name="Lucas S."/>
            <person name="Lapidus A."/>
            <person name="Barry K."/>
            <person name="Detter J.C."/>
            <person name="Glavina del Rio T."/>
            <person name="Dalin E."/>
            <person name="Tice H."/>
            <person name="Pitluck S."/>
            <person name="Chain P."/>
            <person name="Malfatti S."/>
            <person name="Shin M."/>
            <person name="Vergez L."/>
            <person name="Schmutz J."/>
            <person name="Larimer F."/>
            <person name="Land M."/>
            <person name="Hauser L."/>
            <person name="Kyrpides N."/>
            <person name="Kim E."/>
            <person name="Taghavi S."/>
            <person name="Vangronsveld D."/>
            <person name="van der Lelie D."/>
            <person name="Richardson P."/>
        </authorList>
    </citation>
    <scope>NUCLEOTIDE SEQUENCE [LARGE SCALE GENOMIC DNA]</scope>
    <source>
        <strain>W619</strain>
    </source>
</reference>
<protein>
    <recommendedName>
        <fullName evidence="1">Cytidylate kinase</fullName>
        <shortName evidence="1">CK</shortName>
        <ecNumber evidence="1">2.7.4.25</ecNumber>
    </recommendedName>
    <alternativeName>
        <fullName evidence="1">Cytidine monophosphate kinase</fullName>
        <shortName evidence="1">CMP kinase</shortName>
    </alternativeName>
</protein>